<feature type="chain" id="PRO_1000135952" description="2,3-bisphosphoglycerate-dependent phosphoglycerate mutase">
    <location>
        <begin position="1"/>
        <end position="250"/>
    </location>
</feature>
<feature type="active site" description="Tele-phosphohistidine intermediate" evidence="1">
    <location>
        <position position="11"/>
    </location>
</feature>
<feature type="active site" description="Proton donor/acceptor" evidence="1">
    <location>
        <position position="89"/>
    </location>
</feature>
<feature type="binding site" evidence="1">
    <location>
        <begin position="10"/>
        <end position="17"/>
    </location>
    <ligand>
        <name>substrate</name>
    </ligand>
</feature>
<feature type="binding site" evidence="1">
    <location>
        <begin position="23"/>
        <end position="24"/>
    </location>
    <ligand>
        <name>substrate</name>
    </ligand>
</feature>
<feature type="binding site" evidence="1">
    <location>
        <position position="62"/>
    </location>
    <ligand>
        <name>substrate</name>
    </ligand>
</feature>
<feature type="binding site" evidence="1">
    <location>
        <begin position="89"/>
        <end position="92"/>
    </location>
    <ligand>
        <name>substrate</name>
    </ligand>
</feature>
<feature type="binding site" evidence="1">
    <location>
        <position position="100"/>
    </location>
    <ligand>
        <name>substrate</name>
    </ligand>
</feature>
<feature type="binding site" evidence="1">
    <location>
        <begin position="116"/>
        <end position="117"/>
    </location>
    <ligand>
        <name>substrate</name>
    </ligand>
</feature>
<feature type="binding site" evidence="1">
    <location>
        <begin position="185"/>
        <end position="186"/>
    </location>
    <ligand>
        <name>substrate</name>
    </ligand>
</feature>
<feature type="site" description="Transition state stabilizer" evidence="1">
    <location>
        <position position="184"/>
    </location>
</feature>
<reference key="1">
    <citation type="journal article" date="2008" name="Environ. Microbiol.">
        <title>The genome of Erwinia tasmaniensis strain Et1/99, a non-pathogenic bacterium in the genus Erwinia.</title>
        <authorList>
            <person name="Kube M."/>
            <person name="Migdoll A.M."/>
            <person name="Mueller I."/>
            <person name="Kuhl H."/>
            <person name="Beck A."/>
            <person name="Reinhardt R."/>
            <person name="Geider K."/>
        </authorList>
    </citation>
    <scope>NUCLEOTIDE SEQUENCE [LARGE SCALE GENOMIC DNA]</scope>
    <source>
        <strain>DSM 17950 / CFBP 7177 / CIP 109463 / NCPPB 4357 / Et1/99</strain>
    </source>
</reference>
<name>GPMA_ERWT9</name>
<evidence type="ECO:0000255" key="1">
    <source>
        <dbReference type="HAMAP-Rule" id="MF_01039"/>
    </source>
</evidence>
<dbReference type="EC" id="5.4.2.11" evidence="1"/>
<dbReference type="EMBL" id="CU468135">
    <property type="protein sequence ID" value="CAO97327.1"/>
    <property type="molecule type" value="Genomic_DNA"/>
</dbReference>
<dbReference type="RefSeq" id="WP_012441996.1">
    <property type="nucleotide sequence ID" value="NC_010694.1"/>
</dbReference>
<dbReference type="SMR" id="B2VBS6"/>
<dbReference type="STRING" id="465817.ETA_22810"/>
<dbReference type="KEGG" id="eta:ETA_22810"/>
<dbReference type="eggNOG" id="COG0588">
    <property type="taxonomic scope" value="Bacteria"/>
</dbReference>
<dbReference type="HOGENOM" id="CLU_033323_1_1_6"/>
<dbReference type="OrthoDB" id="9781415at2"/>
<dbReference type="UniPathway" id="UPA00109">
    <property type="reaction ID" value="UER00186"/>
</dbReference>
<dbReference type="Proteomes" id="UP000001726">
    <property type="component" value="Chromosome"/>
</dbReference>
<dbReference type="GO" id="GO:0004619">
    <property type="term" value="F:phosphoglycerate mutase activity"/>
    <property type="evidence" value="ECO:0007669"/>
    <property type="project" value="UniProtKB-EC"/>
</dbReference>
<dbReference type="GO" id="GO:0006094">
    <property type="term" value="P:gluconeogenesis"/>
    <property type="evidence" value="ECO:0007669"/>
    <property type="project" value="UniProtKB-UniRule"/>
</dbReference>
<dbReference type="GO" id="GO:0006096">
    <property type="term" value="P:glycolytic process"/>
    <property type="evidence" value="ECO:0007669"/>
    <property type="project" value="UniProtKB-UniRule"/>
</dbReference>
<dbReference type="CDD" id="cd07067">
    <property type="entry name" value="HP_PGM_like"/>
    <property type="match status" value="1"/>
</dbReference>
<dbReference type="FunFam" id="3.40.50.1240:FF:000003">
    <property type="entry name" value="2,3-bisphosphoglycerate-dependent phosphoglycerate mutase"/>
    <property type="match status" value="1"/>
</dbReference>
<dbReference type="Gene3D" id="3.40.50.1240">
    <property type="entry name" value="Phosphoglycerate mutase-like"/>
    <property type="match status" value="1"/>
</dbReference>
<dbReference type="HAMAP" id="MF_01039">
    <property type="entry name" value="PGAM_GpmA"/>
    <property type="match status" value="1"/>
</dbReference>
<dbReference type="InterPro" id="IPR013078">
    <property type="entry name" value="His_Pase_superF_clade-1"/>
</dbReference>
<dbReference type="InterPro" id="IPR029033">
    <property type="entry name" value="His_PPase_superfam"/>
</dbReference>
<dbReference type="InterPro" id="IPR001345">
    <property type="entry name" value="PG/BPGM_mutase_AS"/>
</dbReference>
<dbReference type="InterPro" id="IPR005952">
    <property type="entry name" value="Phosphogly_mut1"/>
</dbReference>
<dbReference type="NCBIfam" id="TIGR01258">
    <property type="entry name" value="pgm_1"/>
    <property type="match status" value="1"/>
</dbReference>
<dbReference type="NCBIfam" id="NF010713">
    <property type="entry name" value="PRK14115.1"/>
    <property type="match status" value="1"/>
</dbReference>
<dbReference type="PANTHER" id="PTHR11931">
    <property type="entry name" value="PHOSPHOGLYCERATE MUTASE"/>
    <property type="match status" value="1"/>
</dbReference>
<dbReference type="Pfam" id="PF00300">
    <property type="entry name" value="His_Phos_1"/>
    <property type="match status" value="1"/>
</dbReference>
<dbReference type="PIRSF" id="PIRSF000709">
    <property type="entry name" value="6PFK_2-Ptase"/>
    <property type="match status" value="1"/>
</dbReference>
<dbReference type="SMART" id="SM00855">
    <property type="entry name" value="PGAM"/>
    <property type="match status" value="1"/>
</dbReference>
<dbReference type="SUPFAM" id="SSF53254">
    <property type="entry name" value="Phosphoglycerate mutase-like"/>
    <property type="match status" value="1"/>
</dbReference>
<dbReference type="PROSITE" id="PS00175">
    <property type="entry name" value="PG_MUTASE"/>
    <property type="match status" value="1"/>
</dbReference>
<organism>
    <name type="scientific">Erwinia tasmaniensis (strain DSM 17950 / CFBP 7177 / CIP 109463 / NCPPB 4357 / Et1/99)</name>
    <dbReference type="NCBI Taxonomy" id="465817"/>
    <lineage>
        <taxon>Bacteria</taxon>
        <taxon>Pseudomonadati</taxon>
        <taxon>Pseudomonadota</taxon>
        <taxon>Gammaproteobacteria</taxon>
        <taxon>Enterobacterales</taxon>
        <taxon>Erwiniaceae</taxon>
        <taxon>Erwinia</taxon>
    </lineage>
</organism>
<protein>
    <recommendedName>
        <fullName evidence="1">2,3-bisphosphoglycerate-dependent phosphoglycerate mutase</fullName>
        <shortName evidence="1">BPG-dependent PGAM</shortName>
        <shortName evidence="1">PGAM</shortName>
        <shortName evidence="1">Phosphoglyceromutase</shortName>
        <shortName evidence="1">dPGM</shortName>
        <ecNumber evidence="1">5.4.2.11</ecNumber>
    </recommendedName>
</protein>
<proteinExistence type="inferred from homology"/>
<gene>
    <name evidence="1" type="primary">gpmA</name>
    <name type="ordered locus">ETA_22810</name>
</gene>
<accession>B2VBS6</accession>
<keyword id="KW-0312">Gluconeogenesis</keyword>
<keyword id="KW-0324">Glycolysis</keyword>
<keyword id="KW-0413">Isomerase</keyword>
<keyword id="KW-1185">Reference proteome</keyword>
<comment type="function">
    <text evidence="1">Catalyzes the interconversion of 2-phosphoglycerate and 3-phosphoglycerate.</text>
</comment>
<comment type="catalytic activity">
    <reaction evidence="1">
        <text>(2R)-2-phosphoglycerate = (2R)-3-phosphoglycerate</text>
        <dbReference type="Rhea" id="RHEA:15901"/>
        <dbReference type="ChEBI" id="CHEBI:58272"/>
        <dbReference type="ChEBI" id="CHEBI:58289"/>
        <dbReference type="EC" id="5.4.2.11"/>
    </reaction>
</comment>
<comment type="pathway">
    <text evidence="1">Carbohydrate degradation; glycolysis; pyruvate from D-glyceraldehyde 3-phosphate: step 3/5.</text>
</comment>
<comment type="subunit">
    <text evidence="1">Homodimer.</text>
</comment>
<comment type="similarity">
    <text evidence="1">Belongs to the phosphoglycerate mutase family. BPG-dependent PGAM subfamily.</text>
</comment>
<sequence>MAVTKLVLVRHGESQWNNENRFTGWYDVDLSDKGRTEAKAAGQLLKKEGFTFDFAYTSVLKRAIHTLWNILDEVDQVWLPVEKSWRLNERHYGALQGLDKAETANKYGDEQVKQWRRGFAVTPPELDRADERFPGHDPRYASLTAEQLPTTESLALTIDRVLPYWNESILPRMKSGEKVIIAAHGNSLRALVKYLDNMSEEEILELNIPTGVPLVYEFDENFKPIKHYYLGDADEIAAKAAAVANQGKAK</sequence>